<dbReference type="EMBL" id="CP000671">
    <property type="protein sequence ID" value="ABQ98868.1"/>
    <property type="molecule type" value="Genomic_DNA"/>
</dbReference>
<dbReference type="SMR" id="A5UDL7"/>
<dbReference type="KEGG" id="hip:CGSHiEE_07755"/>
<dbReference type="HOGENOM" id="CLU_116623_3_0_6"/>
<dbReference type="GO" id="GO:0032153">
    <property type="term" value="C:cell division site"/>
    <property type="evidence" value="ECO:0007669"/>
    <property type="project" value="TreeGrafter"/>
</dbReference>
<dbReference type="GO" id="GO:0030428">
    <property type="term" value="C:cell septum"/>
    <property type="evidence" value="ECO:0007669"/>
    <property type="project" value="TreeGrafter"/>
</dbReference>
<dbReference type="GO" id="GO:0005829">
    <property type="term" value="C:cytosol"/>
    <property type="evidence" value="ECO:0007669"/>
    <property type="project" value="TreeGrafter"/>
</dbReference>
<dbReference type="GO" id="GO:0000917">
    <property type="term" value="P:division septum assembly"/>
    <property type="evidence" value="ECO:0007669"/>
    <property type="project" value="UniProtKB-KW"/>
</dbReference>
<dbReference type="GO" id="GO:0043093">
    <property type="term" value="P:FtsZ-dependent cytokinesis"/>
    <property type="evidence" value="ECO:0007669"/>
    <property type="project" value="TreeGrafter"/>
</dbReference>
<dbReference type="GO" id="GO:0000921">
    <property type="term" value="P:septin ring assembly"/>
    <property type="evidence" value="ECO:0007669"/>
    <property type="project" value="TreeGrafter"/>
</dbReference>
<dbReference type="Gene3D" id="3.30.160.880">
    <property type="entry name" value="Cell division protein ZapA protomer, N-terminal domain"/>
    <property type="match status" value="1"/>
</dbReference>
<dbReference type="InterPro" id="IPR007838">
    <property type="entry name" value="Cell_div_ZapA-like"/>
</dbReference>
<dbReference type="InterPro" id="IPR036192">
    <property type="entry name" value="Cell_div_ZapA-like_sf"/>
</dbReference>
<dbReference type="InterPro" id="IPR042233">
    <property type="entry name" value="Cell_div_ZapA_N"/>
</dbReference>
<dbReference type="PANTHER" id="PTHR34981">
    <property type="entry name" value="CELL DIVISION PROTEIN ZAPA"/>
    <property type="match status" value="1"/>
</dbReference>
<dbReference type="PANTHER" id="PTHR34981:SF1">
    <property type="entry name" value="CELL DIVISION PROTEIN ZAPA"/>
    <property type="match status" value="1"/>
</dbReference>
<dbReference type="Pfam" id="PF05164">
    <property type="entry name" value="ZapA"/>
    <property type="match status" value="1"/>
</dbReference>
<dbReference type="SUPFAM" id="SSF102829">
    <property type="entry name" value="Cell division protein ZapA-like"/>
    <property type="match status" value="1"/>
</dbReference>
<keyword id="KW-0131">Cell cycle</keyword>
<keyword id="KW-0132">Cell division</keyword>
<keyword id="KW-0175">Coiled coil</keyword>
<keyword id="KW-0963">Cytoplasm</keyword>
<keyword id="KW-0717">Septation</keyword>
<protein>
    <recommendedName>
        <fullName>Cell division protein ZapA</fullName>
    </recommendedName>
    <alternativeName>
        <fullName>Z ring-associated protein ZapA</fullName>
    </alternativeName>
</protein>
<accession>A5UDL7</accession>
<gene>
    <name type="primary">zapA</name>
    <name type="ordered locus">CGSHiEE_07755</name>
</gene>
<feature type="chain" id="PRO_0000346123" description="Cell division protein ZapA">
    <location>
        <begin position="1"/>
        <end position="100"/>
    </location>
</feature>
<feature type="coiled-coil region" evidence="2">
    <location>
        <begin position="21"/>
        <end position="45"/>
    </location>
</feature>
<reference key="1">
    <citation type="journal article" date="2007" name="Genome Biol.">
        <title>Characterization and modeling of the Haemophilus influenzae core and supragenomes based on the complete genomic sequences of Rd and 12 clinical nontypeable strains.</title>
        <authorList>
            <person name="Hogg J.S."/>
            <person name="Hu F.Z."/>
            <person name="Janto B."/>
            <person name="Boissy R."/>
            <person name="Hayes J."/>
            <person name="Keefe R."/>
            <person name="Post J.C."/>
            <person name="Ehrlich G.D."/>
        </authorList>
    </citation>
    <scope>NUCLEOTIDE SEQUENCE [LARGE SCALE GENOMIC DNA]</scope>
    <source>
        <strain>PittEE</strain>
    </source>
</reference>
<proteinExistence type="inferred from homology"/>
<sequence length="100" mass="11422">MSLKLVEILVLGQVLRLNVPIEQEELLRQAARNLDILVSEMKEKTGLIQLDRVLSIVALNLSFELSQEKNKTAKIEEVLRTGIQQLDHSLENIRVTKEPH</sequence>
<name>ZAPA_HAEIE</name>
<comment type="function">
    <text evidence="1">Activator of cell division through the inhibition of FtsZ GTPase activity, therefore promoting FtsZ assembly into bundles of protofilaments necessary for the formation of the division Z ring. It is recruited early at mid-cell but it is not essential for cell division (By similarity).</text>
</comment>
<comment type="subunit">
    <text evidence="1">Homodimer. Interacts with FtsZ (By similarity).</text>
</comment>
<comment type="subcellular location">
    <subcellularLocation>
        <location evidence="1">Cytoplasm</location>
    </subcellularLocation>
    <text evidence="1">Localizes at mid-cell.</text>
</comment>
<comment type="similarity">
    <text evidence="3">Belongs to the ZapA family. Type 1 subfamily.</text>
</comment>
<organism>
    <name type="scientific">Haemophilus influenzae (strain PittEE)</name>
    <dbReference type="NCBI Taxonomy" id="374930"/>
    <lineage>
        <taxon>Bacteria</taxon>
        <taxon>Pseudomonadati</taxon>
        <taxon>Pseudomonadota</taxon>
        <taxon>Gammaproteobacteria</taxon>
        <taxon>Pasteurellales</taxon>
        <taxon>Pasteurellaceae</taxon>
        <taxon>Haemophilus</taxon>
    </lineage>
</organism>
<evidence type="ECO:0000250" key="1"/>
<evidence type="ECO:0000255" key="2"/>
<evidence type="ECO:0000305" key="3"/>